<gene>
    <name evidence="1" type="primary">ravA</name>
    <name type="ordered locus">EC55989_4221</name>
</gene>
<dbReference type="EC" id="3.6.1.-" evidence="1"/>
<dbReference type="EMBL" id="CU928145">
    <property type="protein sequence ID" value="CAV00841.1"/>
    <property type="molecule type" value="Genomic_DNA"/>
</dbReference>
<dbReference type="RefSeq" id="WP_001315921.1">
    <property type="nucleotide sequence ID" value="NC_011748.1"/>
</dbReference>
<dbReference type="SMR" id="B7L896"/>
<dbReference type="GeneID" id="75205464"/>
<dbReference type="KEGG" id="eck:EC55989_4221"/>
<dbReference type="HOGENOM" id="CLU_018678_1_0_6"/>
<dbReference type="Proteomes" id="UP000000746">
    <property type="component" value="Chromosome"/>
</dbReference>
<dbReference type="GO" id="GO:0005737">
    <property type="term" value="C:cytoplasm"/>
    <property type="evidence" value="ECO:0007669"/>
    <property type="project" value="UniProtKB-SubCell"/>
</dbReference>
<dbReference type="GO" id="GO:0005524">
    <property type="term" value="F:ATP binding"/>
    <property type="evidence" value="ECO:0007669"/>
    <property type="project" value="UniProtKB-KW"/>
</dbReference>
<dbReference type="GO" id="GO:0016887">
    <property type="term" value="F:ATP hydrolysis activity"/>
    <property type="evidence" value="ECO:0007669"/>
    <property type="project" value="UniProtKB-UniRule"/>
</dbReference>
<dbReference type="CDD" id="cd00009">
    <property type="entry name" value="AAA"/>
    <property type="match status" value="1"/>
</dbReference>
<dbReference type="FunFam" id="3.40.50.300:FF:000410">
    <property type="entry name" value="ATPase RavA"/>
    <property type="match status" value="1"/>
</dbReference>
<dbReference type="Gene3D" id="1.20.58.1510">
    <property type="match status" value="1"/>
</dbReference>
<dbReference type="Gene3D" id="2.40.128.430">
    <property type="match status" value="1"/>
</dbReference>
<dbReference type="Gene3D" id="3.40.50.300">
    <property type="entry name" value="P-loop containing nucleotide triphosphate hydrolases"/>
    <property type="match status" value="1"/>
</dbReference>
<dbReference type="HAMAP" id="MF_01625">
    <property type="entry name" value="ATPase_RavA"/>
    <property type="match status" value="1"/>
</dbReference>
<dbReference type="InterPro" id="IPR003593">
    <property type="entry name" value="AAA+_ATPase"/>
</dbReference>
<dbReference type="InterPro" id="IPR023671">
    <property type="entry name" value="ATPase_RavA"/>
</dbReference>
<dbReference type="InterPro" id="IPR022547">
    <property type="entry name" value="ATPase_RavA_C"/>
</dbReference>
<dbReference type="InterPro" id="IPR045427">
    <property type="entry name" value="MoxR"/>
</dbReference>
<dbReference type="InterPro" id="IPR027417">
    <property type="entry name" value="P-loop_NTPase"/>
</dbReference>
<dbReference type="InterPro" id="IPR041538">
    <property type="entry name" value="RavA-like_AAA_lid"/>
</dbReference>
<dbReference type="InterPro" id="IPR050513">
    <property type="entry name" value="RavA_ATPases"/>
</dbReference>
<dbReference type="InterPro" id="IPR046898">
    <property type="entry name" value="RavA_LARA_dom"/>
</dbReference>
<dbReference type="InterPro" id="IPR046932">
    <property type="entry name" value="RavA_LARA_sf"/>
</dbReference>
<dbReference type="NCBIfam" id="NF010054">
    <property type="entry name" value="PRK13531.1"/>
    <property type="match status" value="1"/>
</dbReference>
<dbReference type="PANTHER" id="PTHR32204">
    <property type="entry name" value="ATPASE RAVA"/>
    <property type="match status" value="1"/>
</dbReference>
<dbReference type="PANTHER" id="PTHR32204:SF0">
    <property type="entry name" value="ATPASE RAVA"/>
    <property type="match status" value="1"/>
</dbReference>
<dbReference type="Pfam" id="PF17868">
    <property type="entry name" value="AAA_lid_8"/>
    <property type="match status" value="1"/>
</dbReference>
<dbReference type="Pfam" id="PF12592">
    <property type="entry name" value="ATPase_RavA_C"/>
    <property type="match status" value="1"/>
</dbReference>
<dbReference type="Pfam" id="PF20030">
    <property type="entry name" value="bpMoxR"/>
    <property type="match status" value="1"/>
</dbReference>
<dbReference type="Pfam" id="PF20265">
    <property type="entry name" value="LARA_dom"/>
    <property type="match status" value="1"/>
</dbReference>
<dbReference type="SMART" id="SM00382">
    <property type="entry name" value="AAA"/>
    <property type="match status" value="1"/>
</dbReference>
<dbReference type="SUPFAM" id="SSF52540">
    <property type="entry name" value="P-loop containing nucleoside triphosphate hydrolases"/>
    <property type="match status" value="1"/>
</dbReference>
<protein>
    <recommendedName>
        <fullName evidence="1">Regulatory ATPase RavA</fullName>
        <ecNumber evidence="1">3.6.1.-</ecNumber>
    </recommendedName>
    <alternativeName>
        <fullName evidence="1">Regulatory ATPase variant A</fullName>
    </alternativeName>
</protein>
<proteinExistence type="inferred from homology"/>
<sequence length="498" mass="56416">MAHPHLLAERISRLSSSLEKGLYERSHAIRLCLLAALSGESVFLLGPPGIAKSLIARRLKFAFQNARAFEYLMTRFSTPEEVFGPLSIQALKDEGRYERLTSGYLPEAEIVFLDEIWKAGPAILNTLLTAINERQFRNGAHVEKIPMRLLVAASNELPEADSSLEALYDRMLIRLWLDKVQDKANFRSMLTSQQDENDNPVPDALQVTDEEYERWQKEIGEITLPDHVFELIFMLRQQLDKLPDAPYVSDRRWKKAIRLLQASAFFSGRSAVAPVDLILLKDCLWYDAQSLNLIQQQIDVLMTGHAWQQQGMLTRLGAIVQRHLQLQQQQSDKTALTVIRLGGIFSRRQQYQLPVNVTASTLTLLLQKPLKLHDMEVVHISFERNALEQWLSKGGEIRGKLNGIGFAQKLNLEVDSAQHLVVRDVSLQGSTLALPGSSAEGLPGEIKQQLEELESDWRKQHALFSEQQKCLFIPGDWLGRIEASLQDVGAQIRQAQQC</sequence>
<accession>B7L896</accession>
<keyword id="KW-0067">ATP-binding</keyword>
<keyword id="KW-0143">Chaperone</keyword>
<keyword id="KW-0963">Cytoplasm</keyword>
<keyword id="KW-0378">Hydrolase</keyword>
<keyword id="KW-0547">Nucleotide-binding</keyword>
<keyword id="KW-1185">Reference proteome</keyword>
<reference key="1">
    <citation type="journal article" date="2009" name="PLoS Genet.">
        <title>Organised genome dynamics in the Escherichia coli species results in highly diverse adaptive paths.</title>
        <authorList>
            <person name="Touchon M."/>
            <person name="Hoede C."/>
            <person name="Tenaillon O."/>
            <person name="Barbe V."/>
            <person name="Baeriswyl S."/>
            <person name="Bidet P."/>
            <person name="Bingen E."/>
            <person name="Bonacorsi S."/>
            <person name="Bouchier C."/>
            <person name="Bouvet O."/>
            <person name="Calteau A."/>
            <person name="Chiapello H."/>
            <person name="Clermont O."/>
            <person name="Cruveiller S."/>
            <person name="Danchin A."/>
            <person name="Diard M."/>
            <person name="Dossat C."/>
            <person name="Karoui M.E."/>
            <person name="Frapy E."/>
            <person name="Garry L."/>
            <person name="Ghigo J.M."/>
            <person name="Gilles A.M."/>
            <person name="Johnson J."/>
            <person name="Le Bouguenec C."/>
            <person name="Lescat M."/>
            <person name="Mangenot S."/>
            <person name="Martinez-Jehanne V."/>
            <person name="Matic I."/>
            <person name="Nassif X."/>
            <person name="Oztas S."/>
            <person name="Petit M.A."/>
            <person name="Pichon C."/>
            <person name="Rouy Z."/>
            <person name="Ruf C.S."/>
            <person name="Schneider D."/>
            <person name="Tourret J."/>
            <person name="Vacherie B."/>
            <person name="Vallenet D."/>
            <person name="Medigue C."/>
            <person name="Rocha E.P.C."/>
            <person name="Denamur E."/>
        </authorList>
    </citation>
    <scope>NUCLEOTIDE SEQUENCE [LARGE SCALE GENOMIC DNA]</scope>
    <source>
        <strain>55989 / EAEC</strain>
    </source>
</reference>
<name>RAVA_ECO55</name>
<evidence type="ECO:0000255" key="1">
    <source>
        <dbReference type="HAMAP-Rule" id="MF_01625"/>
    </source>
</evidence>
<feature type="chain" id="PRO_1000186123" description="Regulatory ATPase RavA">
    <location>
        <begin position="1"/>
        <end position="498"/>
    </location>
</feature>
<feature type="binding site" evidence="1">
    <location>
        <position position="23"/>
    </location>
    <ligand>
        <name>ADP</name>
        <dbReference type="ChEBI" id="CHEBI:456216"/>
    </ligand>
</feature>
<feature type="binding site" evidence="1">
    <location>
        <position position="49"/>
    </location>
    <ligand>
        <name>ADP</name>
        <dbReference type="ChEBI" id="CHEBI:456216"/>
    </ligand>
</feature>
<feature type="binding site" evidence="1">
    <location>
        <position position="50"/>
    </location>
    <ligand>
        <name>ADP</name>
        <dbReference type="ChEBI" id="CHEBI:456216"/>
    </ligand>
</feature>
<feature type="binding site" evidence="1">
    <location>
        <position position="51"/>
    </location>
    <ligand>
        <name>ADP</name>
        <dbReference type="ChEBI" id="CHEBI:456216"/>
    </ligand>
</feature>
<feature type="binding site" evidence="1">
    <location>
        <position position="52"/>
    </location>
    <ligand>
        <name>ADP</name>
        <dbReference type="ChEBI" id="CHEBI:456216"/>
    </ligand>
</feature>
<feature type="binding site" evidence="1">
    <location>
        <position position="53"/>
    </location>
    <ligand>
        <name>ADP</name>
        <dbReference type="ChEBI" id="CHEBI:456216"/>
    </ligand>
</feature>
<feature type="binding site" evidence="1">
    <location>
        <position position="54"/>
    </location>
    <ligand>
        <name>ADP</name>
        <dbReference type="ChEBI" id="CHEBI:456216"/>
    </ligand>
</feature>
<feature type="binding site" evidence="1">
    <location>
        <position position="196"/>
    </location>
    <ligand>
        <name>ADP</name>
        <dbReference type="ChEBI" id="CHEBI:456216"/>
    </ligand>
</feature>
<comment type="function">
    <text evidence="1">Component of the RavA-ViaA chaperone complex, which may act on the membrane to optimize the function of some of the respiratory chains. RavA functions as an ATPase.</text>
</comment>
<comment type="catalytic activity">
    <reaction evidence="1">
        <text>ATP + H2O = ADP + phosphate + H(+)</text>
        <dbReference type="Rhea" id="RHEA:13065"/>
        <dbReference type="ChEBI" id="CHEBI:15377"/>
        <dbReference type="ChEBI" id="CHEBI:15378"/>
        <dbReference type="ChEBI" id="CHEBI:30616"/>
        <dbReference type="ChEBI" id="CHEBI:43474"/>
        <dbReference type="ChEBI" id="CHEBI:456216"/>
    </reaction>
</comment>
<comment type="activity regulation">
    <text evidence="1">ATPase activity is stimulated by ViaA.</text>
</comment>
<comment type="subunit">
    <text evidence="1">Homohexamer. Interacts with ViaA.</text>
</comment>
<comment type="subcellular location">
    <subcellularLocation>
        <location evidence="1">Cytoplasm</location>
    </subcellularLocation>
</comment>
<comment type="similarity">
    <text evidence="1">Belongs to the RavA family.</text>
</comment>
<organism>
    <name type="scientific">Escherichia coli (strain 55989 / EAEC)</name>
    <dbReference type="NCBI Taxonomy" id="585055"/>
    <lineage>
        <taxon>Bacteria</taxon>
        <taxon>Pseudomonadati</taxon>
        <taxon>Pseudomonadota</taxon>
        <taxon>Gammaproteobacteria</taxon>
        <taxon>Enterobacterales</taxon>
        <taxon>Enterobacteriaceae</taxon>
        <taxon>Escherichia</taxon>
    </lineage>
</organism>